<feature type="chain" id="PRO_0000312407" description="Homogentisate 1,2-dioxygenase">
    <location>
        <begin position="1"/>
        <end position="432"/>
    </location>
</feature>
<feature type="binding site" evidence="1">
    <location>
        <position position="333"/>
    </location>
    <ligand>
        <name>Fe cation</name>
        <dbReference type="ChEBI" id="CHEBI:24875"/>
    </ligand>
</feature>
<feature type="binding site" evidence="1">
    <location>
        <position position="339"/>
    </location>
    <ligand>
        <name>Fe cation</name>
        <dbReference type="ChEBI" id="CHEBI:24875"/>
    </ligand>
</feature>
<feature type="binding site" evidence="1">
    <location>
        <position position="369"/>
    </location>
    <ligand>
        <name>Fe cation</name>
        <dbReference type="ChEBI" id="CHEBI:24875"/>
    </ligand>
</feature>
<feature type="sequence conflict" description="In Ref. 2; AAG17115." evidence="2" ref="2">
    <original>ALE</original>
    <variation>TRP</variation>
    <location>
        <begin position="2"/>
        <end position="4"/>
    </location>
</feature>
<reference key="1">
    <citation type="journal article" date="2005" name="Nature">
        <title>The genome of the social amoeba Dictyostelium discoideum.</title>
        <authorList>
            <person name="Eichinger L."/>
            <person name="Pachebat J.A."/>
            <person name="Gloeckner G."/>
            <person name="Rajandream M.A."/>
            <person name="Sucgang R."/>
            <person name="Berriman M."/>
            <person name="Song J."/>
            <person name="Olsen R."/>
            <person name="Szafranski K."/>
            <person name="Xu Q."/>
            <person name="Tunggal B."/>
            <person name="Kummerfeld S."/>
            <person name="Madera M."/>
            <person name="Konfortov B.A."/>
            <person name="Rivero F."/>
            <person name="Bankier A.T."/>
            <person name="Lehmann R."/>
            <person name="Hamlin N."/>
            <person name="Davies R."/>
            <person name="Gaudet P."/>
            <person name="Fey P."/>
            <person name="Pilcher K."/>
            <person name="Chen G."/>
            <person name="Saunders D."/>
            <person name="Sodergren E.J."/>
            <person name="Davis P."/>
            <person name="Kerhornou A."/>
            <person name="Nie X."/>
            <person name="Hall N."/>
            <person name="Anjard C."/>
            <person name="Hemphill L."/>
            <person name="Bason N."/>
            <person name="Farbrother P."/>
            <person name="Desany B."/>
            <person name="Just E."/>
            <person name="Morio T."/>
            <person name="Rost R."/>
            <person name="Churcher C.M."/>
            <person name="Cooper J."/>
            <person name="Haydock S."/>
            <person name="van Driessche N."/>
            <person name="Cronin A."/>
            <person name="Goodhead I."/>
            <person name="Muzny D.M."/>
            <person name="Mourier T."/>
            <person name="Pain A."/>
            <person name="Lu M."/>
            <person name="Harper D."/>
            <person name="Lindsay R."/>
            <person name="Hauser H."/>
            <person name="James K.D."/>
            <person name="Quiles M."/>
            <person name="Madan Babu M."/>
            <person name="Saito T."/>
            <person name="Buchrieser C."/>
            <person name="Wardroper A."/>
            <person name="Felder M."/>
            <person name="Thangavelu M."/>
            <person name="Johnson D."/>
            <person name="Knights A."/>
            <person name="Loulseged H."/>
            <person name="Mungall K.L."/>
            <person name="Oliver K."/>
            <person name="Price C."/>
            <person name="Quail M.A."/>
            <person name="Urushihara H."/>
            <person name="Hernandez J."/>
            <person name="Rabbinowitsch E."/>
            <person name="Steffen D."/>
            <person name="Sanders M."/>
            <person name="Ma J."/>
            <person name="Kohara Y."/>
            <person name="Sharp S."/>
            <person name="Simmonds M.N."/>
            <person name="Spiegler S."/>
            <person name="Tivey A."/>
            <person name="Sugano S."/>
            <person name="White B."/>
            <person name="Walker D."/>
            <person name="Woodward J.R."/>
            <person name="Winckler T."/>
            <person name="Tanaka Y."/>
            <person name="Shaulsky G."/>
            <person name="Schleicher M."/>
            <person name="Weinstock G.M."/>
            <person name="Rosenthal A."/>
            <person name="Cox E.C."/>
            <person name="Chisholm R.L."/>
            <person name="Gibbs R.A."/>
            <person name="Loomis W.F."/>
            <person name="Platzer M."/>
            <person name="Kay R.R."/>
            <person name="Williams J.G."/>
            <person name="Dear P.H."/>
            <person name="Noegel A.A."/>
            <person name="Barrell B.G."/>
            <person name="Kuspa A."/>
        </authorList>
    </citation>
    <scope>NUCLEOTIDE SEQUENCE [LARGE SCALE GENOMIC DNA]</scope>
    <source>
        <strain>AX4</strain>
    </source>
</reference>
<reference key="2">
    <citation type="submission" date="1999-09" db="EMBL/GenBank/DDBJ databases">
        <title>Identification of HGO homologs in different organisms.</title>
        <authorList>
            <person name="Schmidt S.R."/>
        </authorList>
    </citation>
    <scope>NUCLEOTIDE SEQUENCE [MRNA] OF 2-432</scope>
</reference>
<dbReference type="EC" id="1.13.11.5"/>
<dbReference type="EMBL" id="AAFI02000057">
    <property type="protein sequence ID" value="EAL65497.1"/>
    <property type="molecule type" value="Genomic_DNA"/>
</dbReference>
<dbReference type="EMBL" id="AF189237">
    <property type="protein sequence ID" value="AAG17115.1"/>
    <property type="molecule type" value="mRNA"/>
</dbReference>
<dbReference type="RefSeq" id="XP_638887.1">
    <property type="nucleotide sequence ID" value="XM_633795.1"/>
</dbReference>
<dbReference type="SMR" id="Q54QI4"/>
<dbReference type="BioGRID" id="1249288">
    <property type="interactions" value="1"/>
</dbReference>
<dbReference type="FunCoup" id="Q54QI4">
    <property type="interactions" value="4"/>
</dbReference>
<dbReference type="STRING" id="44689.Q54QI4"/>
<dbReference type="GlyGen" id="Q54QI4">
    <property type="glycosylation" value="1 site"/>
</dbReference>
<dbReference type="PaxDb" id="44689-DDB0191461"/>
<dbReference type="EnsemblProtists" id="EAL65497">
    <property type="protein sequence ID" value="EAL65497"/>
    <property type="gene ID" value="DDB_G0283765"/>
</dbReference>
<dbReference type="GeneID" id="8624285"/>
<dbReference type="KEGG" id="ddi:DDB_G0283765"/>
<dbReference type="dictyBase" id="DDB_G0283765">
    <property type="gene designation" value="hgd"/>
</dbReference>
<dbReference type="VEuPathDB" id="AmoebaDB:DDB_G0283765"/>
<dbReference type="eggNOG" id="KOG1417">
    <property type="taxonomic scope" value="Eukaryota"/>
</dbReference>
<dbReference type="HOGENOM" id="CLU_027174_0_0_1"/>
<dbReference type="InParanoid" id="Q54QI4"/>
<dbReference type="OMA" id="MLPHGPD"/>
<dbReference type="PhylomeDB" id="Q54QI4"/>
<dbReference type="Reactome" id="R-DDI-8963684">
    <property type="pathway name" value="Tyrosine catabolism"/>
</dbReference>
<dbReference type="UniPathway" id="UPA00139">
    <property type="reaction ID" value="UER00339"/>
</dbReference>
<dbReference type="PRO" id="PR:Q54QI4"/>
<dbReference type="Proteomes" id="UP000002195">
    <property type="component" value="Chromosome 4"/>
</dbReference>
<dbReference type="GO" id="GO:0004411">
    <property type="term" value="F:homogentisate 1,2-dioxygenase activity"/>
    <property type="evidence" value="ECO:0000318"/>
    <property type="project" value="GO_Central"/>
</dbReference>
<dbReference type="GO" id="GO:0046872">
    <property type="term" value="F:metal ion binding"/>
    <property type="evidence" value="ECO:0007669"/>
    <property type="project" value="UniProtKB-KW"/>
</dbReference>
<dbReference type="GO" id="GO:0006559">
    <property type="term" value="P:L-phenylalanine catabolic process"/>
    <property type="evidence" value="ECO:0000318"/>
    <property type="project" value="GO_Central"/>
</dbReference>
<dbReference type="GO" id="GO:0006572">
    <property type="term" value="P:tyrosine catabolic process"/>
    <property type="evidence" value="ECO:0007669"/>
    <property type="project" value="UniProtKB-KW"/>
</dbReference>
<dbReference type="CDD" id="cd07000">
    <property type="entry name" value="cupin_HGO_N"/>
    <property type="match status" value="1"/>
</dbReference>
<dbReference type="FunFam" id="2.60.120.10:FF:000034">
    <property type="entry name" value="Homogentisate 1,2-dioxygenase"/>
    <property type="match status" value="1"/>
</dbReference>
<dbReference type="Gene3D" id="2.60.120.10">
    <property type="entry name" value="Jelly Rolls"/>
    <property type="match status" value="1"/>
</dbReference>
<dbReference type="InterPro" id="IPR046451">
    <property type="entry name" value="HgmA_C"/>
</dbReference>
<dbReference type="InterPro" id="IPR046452">
    <property type="entry name" value="HgmA_N"/>
</dbReference>
<dbReference type="InterPro" id="IPR005708">
    <property type="entry name" value="Homogentis_dOase"/>
</dbReference>
<dbReference type="InterPro" id="IPR014710">
    <property type="entry name" value="RmlC-like_jellyroll"/>
</dbReference>
<dbReference type="InterPro" id="IPR011051">
    <property type="entry name" value="RmlC_Cupin_sf"/>
</dbReference>
<dbReference type="NCBIfam" id="TIGR01015">
    <property type="entry name" value="hmgA"/>
    <property type="match status" value="1"/>
</dbReference>
<dbReference type="PANTHER" id="PTHR11056">
    <property type="entry name" value="HOMOGENTISATE 1,2-DIOXYGENASE"/>
    <property type="match status" value="1"/>
</dbReference>
<dbReference type="PANTHER" id="PTHR11056:SF0">
    <property type="entry name" value="HOMOGENTISATE 1,2-DIOXYGENASE"/>
    <property type="match status" value="1"/>
</dbReference>
<dbReference type="Pfam" id="PF04209">
    <property type="entry name" value="HgmA_C"/>
    <property type="match status" value="1"/>
</dbReference>
<dbReference type="Pfam" id="PF20510">
    <property type="entry name" value="HgmA_N"/>
    <property type="match status" value="1"/>
</dbReference>
<dbReference type="SUPFAM" id="SSF51182">
    <property type="entry name" value="RmlC-like cupins"/>
    <property type="match status" value="1"/>
</dbReference>
<comment type="catalytic activity">
    <reaction>
        <text>homogentisate + O2 = 4-maleylacetoacetate + H(+)</text>
        <dbReference type="Rhea" id="RHEA:15449"/>
        <dbReference type="ChEBI" id="CHEBI:15378"/>
        <dbReference type="ChEBI" id="CHEBI:15379"/>
        <dbReference type="ChEBI" id="CHEBI:16169"/>
        <dbReference type="ChEBI" id="CHEBI:17105"/>
        <dbReference type="EC" id="1.13.11.5"/>
    </reaction>
</comment>
<comment type="cofactor">
    <cofactor evidence="1">
        <name>Fe cation</name>
        <dbReference type="ChEBI" id="CHEBI:24875"/>
    </cofactor>
</comment>
<comment type="pathway">
    <text>Amino-acid degradation; L-phenylalanine degradation; acetoacetate and fumarate from L-phenylalanine: step 4/6.</text>
</comment>
<comment type="similarity">
    <text evidence="2">Belongs to the homogentisate dioxygenase family.</text>
</comment>
<evidence type="ECO:0000250" key="1"/>
<evidence type="ECO:0000305" key="2"/>
<accession>Q54QI4</accession>
<accession>Q9GU65</accession>
<gene>
    <name type="primary">hgd</name>
    <name type="synonym">hgo</name>
    <name type="ORF">DDB_G0283765</name>
</gene>
<name>HGD_DICDI</name>
<proteinExistence type="evidence at transcript level"/>
<keyword id="KW-0223">Dioxygenase</keyword>
<keyword id="KW-0408">Iron</keyword>
<keyword id="KW-0479">Metal-binding</keyword>
<keyword id="KW-0560">Oxidoreductase</keyword>
<keyword id="KW-0585">Phenylalanine catabolism</keyword>
<keyword id="KW-1185">Reference proteome</keyword>
<keyword id="KW-0828">Tyrosine catabolism</keyword>
<organism>
    <name type="scientific">Dictyostelium discoideum</name>
    <name type="common">Social amoeba</name>
    <dbReference type="NCBI Taxonomy" id="44689"/>
    <lineage>
        <taxon>Eukaryota</taxon>
        <taxon>Amoebozoa</taxon>
        <taxon>Evosea</taxon>
        <taxon>Eumycetozoa</taxon>
        <taxon>Dictyostelia</taxon>
        <taxon>Dictyosteliales</taxon>
        <taxon>Dictyosteliaceae</taxon>
        <taxon>Dictyostelium</taxon>
    </lineage>
</organism>
<sequence>MALEQIDYEYQSGFGNSFESEAIKGTLPKGRNAPQNCPLDLYAEQLSGNAFTAPRHTQQRSWLYRIRPSVCHTPLKPIDSGLVCDLNNLHVDPNQLRWKPFPITEDKPHDFVEGLITIAGAGHASVRHGLAIHIYTATKSMENKSFYNSDGDFLIVPQQGTLDIQTEFGFMKVKSGEICVIQRGITFSVNVEGPTRGYICEVFGSHFKLPDLGPIGANGLANPRDFLSPVAAYEKKEGIEHTKINKFLGKLFSATQTYSPFNVVAWHGNYCPYKYDLSLFCVVNSVSFDHLDPSIFTVLTAPTNEVGVAAADFVIFPPRWLVQENTFRPPYFHRNCMSEFMGLIRGVYEAKKEGFLPGGGSLHSCMTPHGPDSDTFYAAIKAELKPTKIPDVALAFMFESSLILGISDYAKKNFIDDDYWKCWQGLKDNSKI</sequence>
<protein>
    <recommendedName>
        <fullName>Homogentisate 1,2-dioxygenase</fullName>
        <ecNumber>1.13.11.5</ecNumber>
    </recommendedName>
    <alternativeName>
        <fullName>Homogentisate oxygenase</fullName>
    </alternativeName>
    <alternativeName>
        <fullName>Homogentisic acid oxidase</fullName>
    </alternativeName>
    <alternativeName>
        <fullName>Homogentisicase</fullName>
    </alternativeName>
</protein>